<comment type="function">
    <text evidence="1">O-methyltransferase that catalyzes the 2 O-methylation steps in the ubiquinone biosynthetic pathway.</text>
</comment>
<comment type="catalytic activity">
    <reaction evidence="1">
        <text>a 3-demethylubiquinol + S-adenosyl-L-methionine = a ubiquinol + S-adenosyl-L-homocysteine + H(+)</text>
        <dbReference type="Rhea" id="RHEA:44380"/>
        <dbReference type="Rhea" id="RHEA-COMP:9566"/>
        <dbReference type="Rhea" id="RHEA-COMP:10914"/>
        <dbReference type="ChEBI" id="CHEBI:15378"/>
        <dbReference type="ChEBI" id="CHEBI:17976"/>
        <dbReference type="ChEBI" id="CHEBI:57856"/>
        <dbReference type="ChEBI" id="CHEBI:59789"/>
        <dbReference type="ChEBI" id="CHEBI:84422"/>
        <dbReference type="EC" id="2.1.1.64"/>
    </reaction>
</comment>
<comment type="catalytic activity">
    <reaction evidence="1">
        <text>a 3-(all-trans-polyprenyl)benzene-1,2-diol + S-adenosyl-L-methionine = a 2-methoxy-6-(all-trans-polyprenyl)phenol + S-adenosyl-L-homocysteine + H(+)</text>
        <dbReference type="Rhea" id="RHEA:31411"/>
        <dbReference type="Rhea" id="RHEA-COMP:9550"/>
        <dbReference type="Rhea" id="RHEA-COMP:9551"/>
        <dbReference type="ChEBI" id="CHEBI:15378"/>
        <dbReference type="ChEBI" id="CHEBI:57856"/>
        <dbReference type="ChEBI" id="CHEBI:59789"/>
        <dbReference type="ChEBI" id="CHEBI:62729"/>
        <dbReference type="ChEBI" id="CHEBI:62731"/>
        <dbReference type="EC" id="2.1.1.222"/>
    </reaction>
</comment>
<comment type="pathway">
    <text evidence="1">Cofactor biosynthesis; ubiquinone biosynthesis.</text>
</comment>
<comment type="similarity">
    <text evidence="1">Belongs to the methyltransferase superfamily. UbiG/COQ3 family.</text>
</comment>
<name>UBIG_SINFN</name>
<accession>C3MHQ9</accession>
<gene>
    <name evidence="1" type="primary">ubiG</name>
    <name type="ordered locus">NGR_c26610</name>
</gene>
<evidence type="ECO:0000255" key="1">
    <source>
        <dbReference type="HAMAP-Rule" id="MF_00472"/>
    </source>
</evidence>
<protein>
    <recommendedName>
        <fullName evidence="1">Ubiquinone biosynthesis O-methyltransferase</fullName>
    </recommendedName>
    <alternativeName>
        <fullName evidence="1">2-polyprenyl-6-hydroxyphenol methylase</fullName>
        <ecNumber evidence="1">2.1.1.222</ecNumber>
    </alternativeName>
    <alternativeName>
        <fullName evidence="1">3-demethylubiquinone 3-O-methyltransferase</fullName>
        <ecNumber evidence="1">2.1.1.64</ecNumber>
    </alternativeName>
</protein>
<proteinExistence type="inferred from homology"/>
<feature type="chain" id="PRO_1000135509" description="Ubiquinone biosynthesis O-methyltransferase">
    <location>
        <begin position="1"/>
        <end position="248"/>
    </location>
</feature>
<feature type="binding site" evidence="1">
    <location>
        <position position="41"/>
    </location>
    <ligand>
        <name>S-adenosyl-L-methionine</name>
        <dbReference type="ChEBI" id="CHEBI:59789"/>
    </ligand>
</feature>
<feature type="binding site" evidence="1">
    <location>
        <position position="72"/>
    </location>
    <ligand>
        <name>S-adenosyl-L-methionine</name>
        <dbReference type="ChEBI" id="CHEBI:59789"/>
    </ligand>
</feature>
<feature type="binding site" evidence="1">
    <location>
        <position position="93"/>
    </location>
    <ligand>
        <name>S-adenosyl-L-methionine</name>
        <dbReference type="ChEBI" id="CHEBI:59789"/>
    </ligand>
</feature>
<feature type="binding site" evidence="1">
    <location>
        <position position="136"/>
    </location>
    <ligand>
        <name>S-adenosyl-L-methionine</name>
        <dbReference type="ChEBI" id="CHEBI:59789"/>
    </ligand>
</feature>
<reference key="1">
    <citation type="journal article" date="2009" name="Appl. Environ. Microbiol.">
        <title>Rhizobium sp. strain NGR234 possesses a remarkable number of secretion systems.</title>
        <authorList>
            <person name="Schmeisser C."/>
            <person name="Liesegang H."/>
            <person name="Krysciak D."/>
            <person name="Bakkou N."/>
            <person name="Le Quere A."/>
            <person name="Wollherr A."/>
            <person name="Heinemeyer I."/>
            <person name="Morgenstern B."/>
            <person name="Pommerening-Roeser A."/>
            <person name="Flores M."/>
            <person name="Palacios R."/>
            <person name="Brenner S."/>
            <person name="Gottschalk G."/>
            <person name="Schmitz R.A."/>
            <person name="Broughton W.J."/>
            <person name="Perret X."/>
            <person name="Strittmatter A.W."/>
            <person name="Streit W.R."/>
        </authorList>
    </citation>
    <scope>NUCLEOTIDE SEQUENCE [LARGE SCALE GENOMIC DNA]</scope>
    <source>
        <strain>NBRC 101917 / NGR234</strain>
    </source>
</reference>
<organism>
    <name type="scientific">Sinorhizobium fredii (strain NBRC 101917 / NGR234)</name>
    <dbReference type="NCBI Taxonomy" id="394"/>
    <lineage>
        <taxon>Bacteria</taxon>
        <taxon>Pseudomonadati</taxon>
        <taxon>Pseudomonadota</taxon>
        <taxon>Alphaproteobacteria</taxon>
        <taxon>Hyphomicrobiales</taxon>
        <taxon>Rhizobiaceae</taxon>
        <taxon>Sinorhizobium/Ensifer group</taxon>
        <taxon>Sinorhizobium</taxon>
    </lineage>
</organism>
<sequence>MSETARTTIDQSEVDRFSAMAAEWWDPTGKFRPLHKFNPVRLAYIRDKVCEQFGRDPKSPQPLKGLRLLDIGCGGGLLSEPMARMGADVLGADASEKNIGIARTHAAGSGVNVDYRAVTAEALAEAGESFDIVLNMEVVEHVADVDFFMTTCAHMVRPGGLMFVATINRTLKAAALAIFAAENVLRWLPRGTHQYEKLVRPEELEKPLEASGMQVTDRTGVFFNPLANQWNLSKDMDVNYMIVAKRPL</sequence>
<keyword id="KW-0489">Methyltransferase</keyword>
<keyword id="KW-1185">Reference proteome</keyword>
<keyword id="KW-0949">S-adenosyl-L-methionine</keyword>
<keyword id="KW-0808">Transferase</keyword>
<keyword id="KW-0831">Ubiquinone biosynthesis</keyword>
<dbReference type="EC" id="2.1.1.222" evidence="1"/>
<dbReference type="EC" id="2.1.1.64" evidence="1"/>
<dbReference type="EMBL" id="CP001389">
    <property type="protein sequence ID" value="ACP26411.1"/>
    <property type="molecule type" value="Genomic_DNA"/>
</dbReference>
<dbReference type="RefSeq" id="WP_012709168.1">
    <property type="nucleotide sequence ID" value="NC_012587.1"/>
</dbReference>
<dbReference type="RefSeq" id="YP_002827164.1">
    <property type="nucleotide sequence ID" value="NC_012587.1"/>
</dbReference>
<dbReference type="SMR" id="C3MHQ9"/>
<dbReference type="STRING" id="394.NGR_c26610"/>
<dbReference type="KEGG" id="rhi:NGR_c26610"/>
<dbReference type="PATRIC" id="fig|394.7.peg.5483"/>
<dbReference type="eggNOG" id="COG2227">
    <property type="taxonomic scope" value="Bacteria"/>
</dbReference>
<dbReference type="HOGENOM" id="CLU_042432_0_0_5"/>
<dbReference type="OrthoDB" id="9801538at2"/>
<dbReference type="UniPathway" id="UPA00232"/>
<dbReference type="Proteomes" id="UP000001054">
    <property type="component" value="Chromosome"/>
</dbReference>
<dbReference type="GO" id="GO:0102208">
    <property type="term" value="F:2-polyprenyl-6-hydroxyphenol methylase activity"/>
    <property type="evidence" value="ECO:0007669"/>
    <property type="project" value="UniProtKB-EC"/>
</dbReference>
<dbReference type="GO" id="GO:0061542">
    <property type="term" value="F:3-demethylubiquinol 3-O-methyltransferase activity"/>
    <property type="evidence" value="ECO:0007669"/>
    <property type="project" value="UniProtKB-UniRule"/>
</dbReference>
<dbReference type="GO" id="GO:0010420">
    <property type="term" value="F:polyprenyldihydroxybenzoate methyltransferase activity"/>
    <property type="evidence" value="ECO:0007669"/>
    <property type="project" value="InterPro"/>
</dbReference>
<dbReference type="GO" id="GO:0032259">
    <property type="term" value="P:methylation"/>
    <property type="evidence" value="ECO:0007669"/>
    <property type="project" value="UniProtKB-KW"/>
</dbReference>
<dbReference type="CDD" id="cd02440">
    <property type="entry name" value="AdoMet_MTases"/>
    <property type="match status" value="1"/>
</dbReference>
<dbReference type="Gene3D" id="3.40.50.150">
    <property type="entry name" value="Vaccinia Virus protein VP39"/>
    <property type="match status" value="1"/>
</dbReference>
<dbReference type="HAMAP" id="MF_00472">
    <property type="entry name" value="UbiG"/>
    <property type="match status" value="1"/>
</dbReference>
<dbReference type="InterPro" id="IPR029063">
    <property type="entry name" value="SAM-dependent_MTases_sf"/>
</dbReference>
<dbReference type="InterPro" id="IPR010233">
    <property type="entry name" value="UbiG_MeTrfase"/>
</dbReference>
<dbReference type="NCBIfam" id="TIGR01983">
    <property type="entry name" value="UbiG"/>
    <property type="match status" value="1"/>
</dbReference>
<dbReference type="PANTHER" id="PTHR43464">
    <property type="entry name" value="METHYLTRANSFERASE"/>
    <property type="match status" value="1"/>
</dbReference>
<dbReference type="PANTHER" id="PTHR43464:SF19">
    <property type="entry name" value="UBIQUINONE BIOSYNTHESIS O-METHYLTRANSFERASE, MITOCHONDRIAL"/>
    <property type="match status" value="1"/>
</dbReference>
<dbReference type="Pfam" id="PF13489">
    <property type="entry name" value="Methyltransf_23"/>
    <property type="match status" value="1"/>
</dbReference>
<dbReference type="SUPFAM" id="SSF53335">
    <property type="entry name" value="S-adenosyl-L-methionine-dependent methyltransferases"/>
    <property type="match status" value="1"/>
</dbReference>